<evidence type="ECO:0000250" key="1"/>
<evidence type="ECO:0000256" key="2">
    <source>
        <dbReference type="SAM" id="MobiDB-lite"/>
    </source>
</evidence>
<evidence type="ECO:0000305" key="3"/>
<reference key="1">
    <citation type="journal article" date="2012" name="MBio">
        <title>Comparative genome analysis of Trichophyton rubrum and related dermatophytes reveals candidate genes involved in infection.</title>
        <authorList>
            <person name="Martinez D.A."/>
            <person name="Oliver B.G."/>
            <person name="Graeser Y."/>
            <person name="Goldberg J.M."/>
            <person name="Li W."/>
            <person name="Martinez-Rossi N.M."/>
            <person name="Monod M."/>
            <person name="Shelest E."/>
            <person name="Barton R.C."/>
            <person name="Birch E."/>
            <person name="Brakhage A.A."/>
            <person name="Chen Z."/>
            <person name="Gurr S.J."/>
            <person name="Heiman D."/>
            <person name="Heitman J."/>
            <person name="Kosti I."/>
            <person name="Rossi A."/>
            <person name="Saif S."/>
            <person name="Samalova M."/>
            <person name="Saunders C.W."/>
            <person name="Shea T."/>
            <person name="Summerbell R.C."/>
            <person name="Xu J."/>
            <person name="Young S."/>
            <person name="Zeng Q."/>
            <person name="Birren B.W."/>
            <person name="Cuomo C.A."/>
            <person name="White T.C."/>
        </authorList>
    </citation>
    <scope>NUCLEOTIDE SEQUENCE [LARGE SCALE GENOMIC DNA]</scope>
    <source>
        <strain>ATCC MYA-4604 / CBS 118893</strain>
    </source>
</reference>
<name>NOP9_ARTGP</name>
<organism>
    <name type="scientific">Arthroderma gypseum (strain ATCC MYA-4604 / CBS 118893)</name>
    <name type="common">Microsporum gypseum</name>
    <dbReference type="NCBI Taxonomy" id="535722"/>
    <lineage>
        <taxon>Eukaryota</taxon>
        <taxon>Fungi</taxon>
        <taxon>Dikarya</taxon>
        <taxon>Ascomycota</taxon>
        <taxon>Pezizomycotina</taxon>
        <taxon>Eurotiomycetes</taxon>
        <taxon>Eurotiomycetidae</taxon>
        <taxon>Onygenales</taxon>
        <taxon>Arthrodermataceae</taxon>
        <taxon>Nannizzia</taxon>
    </lineage>
</organism>
<protein>
    <recommendedName>
        <fullName>Nucleolar protein 9</fullName>
    </recommendedName>
    <alternativeName>
        <fullName>Pumilio domain-containing protein NOP9</fullName>
    </alternativeName>
</protein>
<comment type="function">
    <text evidence="1">RNA-binding nucleolar protein required for pre-rRNA processing. Involved in production of 18S rRNA and assembly of small ribosomal subunit (By similarity).</text>
</comment>
<comment type="subcellular location">
    <subcellularLocation>
        <location evidence="1">Nucleus</location>
        <location evidence="1">Nucleolus</location>
    </subcellularLocation>
</comment>
<comment type="similarity">
    <text evidence="3">Belongs to the NOP9 family.</text>
</comment>
<dbReference type="EMBL" id="DS989822">
    <property type="protein sequence ID" value="EFQ98245.1"/>
    <property type="molecule type" value="Genomic_DNA"/>
</dbReference>
<dbReference type="RefSeq" id="XP_003177197.1">
    <property type="nucleotide sequence ID" value="XM_003177149.1"/>
</dbReference>
<dbReference type="SMR" id="E5QZZ6"/>
<dbReference type="FunCoup" id="E5QZZ6">
    <property type="interactions" value="900"/>
</dbReference>
<dbReference type="STRING" id="535722.E5QZZ6"/>
<dbReference type="GeneID" id="10032522"/>
<dbReference type="VEuPathDB" id="FungiDB:MGYG_08923"/>
<dbReference type="eggNOG" id="KOG2188">
    <property type="taxonomic scope" value="Eukaryota"/>
</dbReference>
<dbReference type="HOGENOM" id="CLU_008720_1_1_1"/>
<dbReference type="InParanoid" id="E5QZZ6"/>
<dbReference type="OMA" id="HHLVRNF"/>
<dbReference type="OrthoDB" id="392571at2759"/>
<dbReference type="Proteomes" id="UP000002669">
    <property type="component" value="Unassembled WGS sequence"/>
</dbReference>
<dbReference type="GO" id="GO:0030686">
    <property type="term" value="C:90S preribosome"/>
    <property type="evidence" value="ECO:0007669"/>
    <property type="project" value="TreeGrafter"/>
</dbReference>
<dbReference type="GO" id="GO:0005730">
    <property type="term" value="C:nucleolus"/>
    <property type="evidence" value="ECO:0007669"/>
    <property type="project" value="UniProtKB-SubCell"/>
</dbReference>
<dbReference type="GO" id="GO:0030688">
    <property type="term" value="C:preribosome, small subunit precursor"/>
    <property type="evidence" value="ECO:0007669"/>
    <property type="project" value="TreeGrafter"/>
</dbReference>
<dbReference type="GO" id="GO:0003723">
    <property type="term" value="F:RNA binding"/>
    <property type="evidence" value="ECO:0007669"/>
    <property type="project" value="InterPro"/>
</dbReference>
<dbReference type="GO" id="GO:0000480">
    <property type="term" value="P:endonucleolytic cleavage in 5'-ETS of tricistronic rRNA transcript (SSU-rRNA, 5.8S rRNA, LSU-rRNA)"/>
    <property type="evidence" value="ECO:0007669"/>
    <property type="project" value="TreeGrafter"/>
</dbReference>
<dbReference type="GO" id="GO:0000447">
    <property type="term" value="P:endonucleolytic cleavage in ITS1 to separate SSU-rRNA from 5.8S rRNA and LSU-rRNA from tricistronic rRNA transcript (SSU-rRNA, 5.8S rRNA, LSU-rRNA)"/>
    <property type="evidence" value="ECO:0007669"/>
    <property type="project" value="TreeGrafter"/>
</dbReference>
<dbReference type="GO" id="GO:0000472">
    <property type="term" value="P:endonucleolytic cleavage to generate mature 5'-end of SSU-rRNA from (SSU-rRNA, 5.8S rRNA, LSU-rRNA)"/>
    <property type="evidence" value="ECO:0007669"/>
    <property type="project" value="TreeGrafter"/>
</dbReference>
<dbReference type="GO" id="GO:0000056">
    <property type="term" value="P:ribosomal small subunit export from nucleus"/>
    <property type="evidence" value="ECO:0007669"/>
    <property type="project" value="TreeGrafter"/>
</dbReference>
<dbReference type="Gene3D" id="1.25.10.10">
    <property type="entry name" value="Leucine-rich Repeat Variant"/>
    <property type="match status" value="3"/>
</dbReference>
<dbReference type="InterPro" id="IPR011989">
    <property type="entry name" value="ARM-like"/>
</dbReference>
<dbReference type="InterPro" id="IPR016024">
    <property type="entry name" value="ARM-type_fold"/>
</dbReference>
<dbReference type="InterPro" id="IPR040000">
    <property type="entry name" value="NOP9"/>
</dbReference>
<dbReference type="InterPro" id="IPR001313">
    <property type="entry name" value="Pumilio_RNA-bd_rpt"/>
</dbReference>
<dbReference type="PANTHER" id="PTHR13102">
    <property type="entry name" value="NUCLEOLAR PROTEIN 9"/>
    <property type="match status" value="1"/>
</dbReference>
<dbReference type="PANTHER" id="PTHR13102:SF0">
    <property type="entry name" value="NUCLEOLAR PROTEIN 9"/>
    <property type="match status" value="1"/>
</dbReference>
<dbReference type="Pfam" id="PF22493">
    <property type="entry name" value="PUF_NOP9"/>
    <property type="match status" value="1"/>
</dbReference>
<dbReference type="SMART" id="SM00025">
    <property type="entry name" value="Pumilio"/>
    <property type="match status" value="4"/>
</dbReference>
<dbReference type="SUPFAM" id="SSF48371">
    <property type="entry name" value="ARM repeat"/>
    <property type="match status" value="1"/>
</dbReference>
<dbReference type="PROSITE" id="PS50302">
    <property type="entry name" value="PUM"/>
    <property type="match status" value="5"/>
</dbReference>
<accession>E5QZZ6</accession>
<feature type="chain" id="PRO_0000407794" description="Nucleolar protein 9">
    <location>
        <begin position="1"/>
        <end position="702"/>
    </location>
</feature>
<feature type="repeat" description="Pumilio 1">
    <location>
        <begin position="288"/>
        <end position="325"/>
    </location>
</feature>
<feature type="repeat" description="Pumilio 2">
    <location>
        <begin position="344"/>
        <end position="379"/>
    </location>
</feature>
<feature type="repeat" description="Pumilio 3">
    <location>
        <begin position="380"/>
        <end position="416"/>
    </location>
</feature>
<feature type="repeat" description="Pumilio 4">
    <location>
        <begin position="520"/>
        <end position="561"/>
    </location>
</feature>
<feature type="repeat" description="Pumilio 5">
    <location>
        <begin position="562"/>
        <end position="599"/>
    </location>
</feature>
<feature type="region of interest" description="Disordered" evidence="2">
    <location>
        <begin position="1"/>
        <end position="68"/>
    </location>
</feature>
<feature type="region of interest" description="Disordered" evidence="2">
    <location>
        <begin position="162"/>
        <end position="189"/>
    </location>
</feature>
<feature type="region of interest" description="Disordered" evidence="2">
    <location>
        <begin position="639"/>
        <end position="702"/>
    </location>
</feature>
<feature type="compositionally biased region" description="Basic residues" evidence="2">
    <location>
        <begin position="1"/>
        <end position="11"/>
    </location>
</feature>
<feature type="compositionally biased region" description="Basic and acidic residues" evidence="2">
    <location>
        <begin position="12"/>
        <end position="22"/>
    </location>
</feature>
<feature type="compositionally biased region" description="Basic and acidic residues" evidence="2">
    <location>
        <begin position="52"/>
        <end position="61"/>
    </location>
</feature>
<feature type="compositionally biased region" description="Polar residues" evidence="2">
    <location>
        <begin position="643"/>
        <end position="652"/>
    </location>
</feature>
<feature type="compositionally biased region" description="Basic and acidic residues" evidence="2">
    <location>
        <begin position="673"/>
        <end position="685"/>
    </location>
</feature>
<proteinExistence type="inferred from homology"/>
<sequence length="702" mass="78452">MPREKKKRGRRAEKSQSKRKWEDDEVPTSPKRQRTADEDNEAQAGDDYIPLDTRDTEKEQEQGQEDDTPFYGLLDAEEQEYFSKASQTLELNSFEDDDDKRLFIESVYAEARGKELKIACRQVKTLFEKFTGHFLHLVQHRFASHCCECLFIRAAPIVTSEMEKPKDRKKERKQTIENNGEEGGQDEPLNQRSAMELFLGVISELEGNWGYLLTESFASHTIRVLLLILAGEPLAGQSNARVLASRKKENVDSITPTSQSELTIQGSRQVPVEFNNTLRRMISDLSAGLNSTYLQALATHPIGSPVLQVILSIELGCMGTEKLKDKNSVFRRLIPDDTLETKEEGVNFLNSLFYDPVGSRLLETIVRVAPGKFFKTFYKNIIRERIGSLARNEIASYVVIKVLERVSREDLESAIESILPEIPSLVQRSRLNVIKTIIDRSIIRSADTASLAKALESAYGEDGLARLKAILGVETKDKDAEDLAKVKPKAGTSPQHIHGSLLAQSMLQASGTLAAMIQSSFLTAPTETLIQIANNPTASRALQEALKPSKLNTQFRRQFLPRFYGQMCDLSLDSSGSHVADALWDATSDLIFIKQRLAQELADNEPALRDSFLGRAVWRNWSMDLYKRKRGEWMSKAKGLDNTKVSPSTADSSAGPAKSKLDLARARYAARAEQQEKPDGKDQGSRGKKQALSAPSGLLKAQ</sequence>
<gene>
    <name type="primary">NOP9</name>
    <name type="ORF">MGYG_08923</name>
</gene>
<keyword id="KW-0539">Nucleus</keyword>
<keyword id="KW-1185">Reference proteome</keyword>
<keyword id="KW-0677">Repeat</keyword>
<keyword id="KW-0690">Ribosome biogenesis</keyword>
<keyword id="KW-0698">rRNA processing</keyword>